<dbReference type="EC" id="7.2.2.-"/>
<dbReference type="EMBL" id="X71022">
    <property type="protein sequence ID" value="CAA50340.1"/>
    <property type="molecule type" value="Genomic_DNA"/>
</dbReference>
<dbReference type="EMBL" id="BA000022">
    <property type="protein sequence ID" value="BAA17897.1"/>
    <property type="molecule type" value="Genomic_DNA"/>
</dbReference>
<dbReference type="PIR" id="S75035">
    <property type="entry name" value="S75035"/>
</dbReference>
<dbReference type="SMR" id="P37367"/>
<dbReference type="IntAct" id="P37367">
    <property type="interactions" value="51"/>
</dbReference>
<dbReference type="STRING" id="1148.gene:10498766"/>
<dbReference type="TCDB" id="3.A.3.2.4">
    <property type="family name" value="the p-type atpase (p-atpase) superfamily"/>
</dbReference>
<dbReference type="PaxDb" id="1148-1652980"/>
<dbReference type="EnsemblBacteria" id="BAA17897">
    <property type="protein sequence ID" value="BAA17897"/>
    <property type="gene ID" value="BAA17897"/>
</dbReference>
<dbReference type="KEGG" id="syn:sll1614"/>
<dbReference type="eggNOG" id="COG0474">
    <property type="taxonomic scope" value="Bacteria"/>
</dbReference>
<dbReference type="InParanoid" id="P37367"/>
<dbReference type="PhylomeDB" id="P37367"/>
<dbReference type="Proteomes" id="UP000001425">
    <property type="component" value="Chromosome"/>
</dbReference>
<dbReference type="GO" id="GO:0043231">
    <property type="term" value="C:intracellular membrane-bounded organelle"/>
    <property type="evidence" value="ECO:0000318"/>
    <property type="project" value="GO_Central"/>
</dbReference>
<dbReference type="GO" id="GO:0005886">
    <property type="term" value="C:plasma membrane"/>
    <property type="evidence" value="ECO:0000318"/>
    <property type="project" value="GO_Central"/>
</dbReference>
<dbReference type="GO" id="GO:0005524">
    <property type="term" value="F:ATP binding"/>
    <property type="evidence" value="ECO:0007669"/>
    <property type="project" value="UniProtKB-KW"/>
</dbReference>
<dbReference type="GO" id="GO:0016887">
    <property type="term" value="F:ATP hydrolysis activity"/>
    <property type="evidence" value="ECO:0007669"/>
    <property type="project" value="InterPro"/>
</dbReference>
<dbReference type="GO" id="GO:0005388">
    <property type="term" value="F:P-type calcium transporter activity"/>
    <property type="evidence" value="ECO:0000318"/>
    <property type="project" value="GO_Central"/>
</dbReference>
<dbReference type="CDD" id="cd02080">
    <property type="entry name" value="P-type_ATPase_cation"/>
    <property type="match status" value="1"/>
</dbReference>
<dbReference type="FunFam" id="3.40.50.1000:FF:000028">
    <property type="entry name" value="Calcium-transporting P-type ATPase, putative"/>
    <property type="match status" value="1"/>
</dbReference>
<dbReference type="FunFam" id="3.40.1110.10:FF:000094">
    <property type="entry name" value="Cation-transporting P-type ATPase"/>
    <property type="match status" value="1"/>
</dbReference>
<dbReference type="FunFam" id="3.40.50.1000:FF:000001">
    <property type="entry name" value="Phospholipid-transporting ATPase IC"/>
    <property type="match status" value="1"/>
</dbReference>
<dbReference type="FunFam" id="2.70.150.10:FF:000160">
    <property type="entry name" value="Sarcoplasmic/endoplasmic reticulum calcium ATPase 1"/>
    <property type="match status" value="1"/>
</dbReference>
<dbReference type="Gene3D" id="3.40.1110.10">
    <property type="entry name" value="Calcium-transporting ATPase, cytoplasmic domain N"/>
    <property type="match status" value="1"/>
</dbReference>
<dbReference type="Gene3D" id="2.70.150.10">
    <property type="entry name" value="Calcium-transporting ATPase, cytoplasmic transduction domain A"/>
    <property type="match status" value="1"/>
</dbReference>
<dbReference type="Gene3D" id="1.20.1110.10">
    <property type="entry name" value="Calcium-transporting ATPase, transmembrane domain"/>
    <property type="match status" value="1"/>
</dbReference>
<dbReference type="Gene3D" id="3.40.50.1000">
    <property type="entry name" value="HAD superfamily/HAD-like"/>
    <property type="match status" value="1"/>
</dbReference>
<dbReference type="InterPro" id="IPR006068">
    <property type="entry name" value="ATPase_P-typ_cation-transptr_C"/>
</dbReference>
<dbReference type="InterPro" id="IPR004014">
    <property type="entry name" value="ATPase_P-typ_cation-transptr_N"/>
</dbReference>
<dbReference type="InterPro" id="IPR023299">
    <property type="entry name" value="ATPase_P-typ_cyto_dom_N"/>
</dbReference>
<dbReference type="InterPro" id="IPR018303">
    <property type="entry name" value="ATPase_P-typ_P_site"/>
</dbReference>
<dbReference type="InterPro" id="IPR023298">
    <property type="entry name" value="ATPase_P-typ_TM_dom_sf"/>
</dbReference>
<dbReference type="InterPro" id="IPR008250">
    <property type="entry name" value="ATPase_P-typ_transduc_dom_A_sf"/>
</dbReference>
<dbReference type="InterPro" id="IPR050510">
    <property type="entry name" value="Cation_transp_ATPase_P-type"/>
</dbReference>
<dbReference type="InterPro" id="IPR036412">
    <property type="entry name" value="HAD-like_sf"/>
</dbReference>
<dbReference type="InterPro" id="IPR023214">
    <property type="entry name" value="HAD_sf"/>
</dbReference>
<dbReference type="InterPro" id="IPR001757">
    <property type="entry name" value="P_typ_ATPase"/>
</dbReference>
<dbReference type="InterPro" id="IPR044492">
    <property type="entry name" value="P_typ_ATPase_HD_dom"/>
</dbReference>
<dbReference type="NCBIfam" id="TIGR01494">
    <property type="entry name" value="ATPase_P-type"/>
    <property type="match status" value="3"/>
</dbReference>
<dbReference type="PANTHER" id="PTHR43294:SF20">
    <property type="entry name" value="P-TYPE ATPASE"/>
    <property type="match status" value="1"/>
</dbReference>
<dbReference type="PANTHER" id="PTHR43294">
    <property type="entry name" value="SODIUM/POTASSIUM-TRANSPORTING ATPASE SUBUNIT ALPHA"/>
    <property type="match status" value="1"/>
</dbReference>
<dbReference type="Pfam" id="PF13246">
    <property type="entry name" value="Cation_ATPase"/>
    <property type="match status" value="1"/>
</dbReference>
<dbReference type="Pfam" id="PF00689">
    <property type="entry name" value="Cation_ATPase_C"/>
    <property type="match status" value="1"/>
</dbReference>
<dbReference type="Pfam" id="PF00690">
    <property type="entry name" value="Cation_ATPase_N"/>
    <property type="match status" value="1"/>
</dbReference>
<dbReference type="Pfam" id="PF00122">
    <property type="entry name" value="E1-E2_ATPase"/>
    <property type="match status" value="1"/>
</dbReference>
<dbReference type="Pfam" id="PF00702">
    <property type="entry name" value="Hydrolase"/>
    <property type="match status" value="1"/>
</dbReference>
<dbReference type="PRINTS" id="PR00119">
    <property type="entry name" value="CATATPASE"/>
</dbReference>
<dbReference type="PRINTS" id="PR00120">
    <property type="entry name" value="HATPASE"/>
</dbReference>
<dbReference type="SFLD" id="SFLDS00003">
    <property type="entry name" value="Haloacid_Dehalogenase"/>
    <property type="match status" value="1"/>
</dbReference>
<dbReference type="SFLD" id="SFLDF00027">
    <property type="entry name" value="p-type_atpase"/>
    <property type="match status" value="1"/>
</dbReference>
<dbReference type="SMART" id="SM00831">
    <property type="entry name" value="Cation_ATPase_N"/>
    <property type="match status" value="1"/>
</dbReference>
<dbReference type="SUPFAM" id="SSF81653">
    <property type="entry name" value="Calcium ATPase, transduction domain A"/>
    <property type="match status" value="1"/>
</dbReference>
<dbReference type="SUPFAM" id="SSF81665">
    <property type="entry name" value="Calcium ATPase, transmembrane domain M"/>
    <property type="match status" value="1"/>
</dbReference>
<dbReference type="SUPFAM" id="SSF56784">
    <property type="entry name" value="HAD-like"/>
    <property type="match status" value="1"/>
</dbReference>
<dbReference type="SUPFAM" id="SSF81660">
    <property type="entry name" value="Metal cation-transporting ATPase, ATP-binding domain N"/>
    <property type="match status" value="1"/>
</dbReference>
<dbReference type="PROSITE" id="PS00154">
    <property type="entry name" value="ATPASE_E1_E2"/>
    <property type="match status" value="1"/>
</dbReference>
<name>ATA1_SYNY3</name>
<keyword id="KW-0067">ATP-binding</keyword>
<keyword id="KW-1003">Cell membrane</keyword>
<keyword id="KW-0460">Magnesium</keyword>
<keyword id="KW-0472">Membrane</keyword>
<keyword id="KW-0547">Nucleotide-binding</keyword>
<keyword id="KW-0597">Phosphoprotein</keyword>
<keyword id="KW-1185">Reference proteome</keyword>
<keyword id="KW-1278">Translocase</keyword>
<keyword id="KW-0812">Transmembrane</keyword>
<keyword id="KW-1133">Transmembrane helix</keyword>
<organism>
    <name type="scientific">Synechocystis sp. (strain ATCC 27184 / PCC 6803 / Kazusa)</name>
    <dbReference type="NCBI Taxonomy" id="1111708"/>
    <lineage>
        <taxon>Bacteria</taxon>
        <taxon>Bacillati</taxon>
        <taxon>Cyanobacteriota</taxon>
        <taxon>Cyanophyceae</taxon>
        <taxon>Synechococcales</taxon>
        <taxon>Merismopediaceae</taxon>
        <taxon>Synechocystis</taxon>
    </lineage>
</organism>
<gene>
    <name type="primary">pma1</name>
    <name type="ordered locus">sll1614</name>
</gene>
<protein>
    <recommendedName>
        <fullName>Cation-transporting ATPase pma1</fullName>
        <ecNumber>7.2.2.-</ecNumber>
    </recommendedName>
</protein>
<comment type="function">
    <text>Could mediate calcium influx.</text>
</comment>
<comment type="catalytic activity">
    <reaction>
        <text>ATP + H2O = ADP + phosphate + H(+)</text>
        <dbReference type="Rhea" id="RHEA:13065"/>
        <dbReference type="ChEBI" id="CHEBI:15377"/>
        <dbReference type="ChEBI" id="CHEBI:15378"/>
        <dbReference type="ChEBI" id="CHEBI:30616"/>
        <dbReference type="ChEBI" id="CHEBI:43474"/>
        <dbReference type="ChEBI" id="CHEBI:456216"/>
    </reaction>
</comment>
<comment type="subcellular location">
    <subcellularLocation>
        <location>Cell membrane</location>
        <topology>Multi-pass membrane protein</topology>
    </subcellularLocation>
</comment>
<comment type="similarity">
    <text evidence="2">Belongs to the cation transport ATPase (P-type) (TC 3.A.3) family. Type IIA subfamily.</text>
</comment>
<sequence>MDFPTLSSYLHHHRPGEDILADLHTDPGLGLTAEAVAQRYEQYGRNELKFKPGKPAWLRFLLQFHQPLLYILLIAGTVKAFLGSWTNAWVIWGVTLVNAIIGYIQEAKAEGAIASLAKAVTTEATVLRDGQNLRIPSQDLVIGDIVSLASGDKVPADLRLLKVRNLQVDESALTGEAVPVEKAVELLPEETPLAERLNMAYAGSFVTFGQGTGVVVATANATEMGQISQSMEKQVSLMTPLTRKFAKFSHTLLYVIVTLAAFTFAVGWGRGGSPLEMFEAAVALAVSAIPEGLPAVVTVTLAIGVNRMAKRNAIIRKLPAVEALGSATVVCSDKTGTLTENQMTVQAVYAGGKHYEVSGGGYSPKGEFWQVMGEEVDNVLLDGLPPVLEECLLTGMLCNDSQLEHRGDDWAVVGDPTEGALLASAAKAGFSQAGLASQKPRLDSIPFESDYQYMATLHDGDGRTIYVKGSVESLLQRCESMLLDDGQMVSIDRGEIEENVEDMAQQGLRVLAFAKKTVEPHHHAIDHGDIETGLIFLGLQGMIDPPRPEAIAAVHACHDAGIEVKMITGDHISTAQAIAKRMGIAAEGDGIAFEGRQLATMGPAELAQAAEDSCVFARVAPAQKLQLVEALQEKGHIVAMTGDGVNDAPALKRADIGIAMGKGGTEVARESSDMLLTDDNFASIEAAVEEGRTVYQNLRKAIAFLLPVNGGESMTILISVLLALNLPILSLQVLWLNMINSITMTVPLAFEAKSPGIMQQAPRNPNEPLITKKLLHRILLVSLFNWILIFGMFEWVNRTYDDLALARTMAIQALVAARVIYLLSISQLGRSFLGYVTGKRQTITKASILLLGIAVAIALQIGFSQLPFMNVLFKTAPMDWQQWAICLLPMIPMVPVAILANRLDP</sequence>
<reference key="1">
    <citation type="journal article" date="1993" name="J. Mol. Biol.">
        <title>Molecular cloning of a P-type ATPase gene from the cyanobacterium Synechocystis sp. PCC 6803. Homology to eukaryotic Ca(2+)-ATPases.</title>
        <authorList>
            <person name="Geisler M."/>
            <person name="Richter J."/>
            <person name="Schumann J."/>
        </authorList>
    </citation>
    <scope>NUCLEOTIDE SEQUENCE [GENOMIC DNA]</scope>
</reference>
<reference key="2">
    <citation type="journal article" date="1996" name="DNA Res.">
        <title>Sequence analysis of the genome of the unicellular cyanobacterium Synechocystis sp. strain PCC6803. II. Sequence determination of the entire genome and assignment of potential protein-coding regions.</title>
        <authorList>
            <person name="Kaneko T."/>
            <person name="Sato S."/>
            <person name="Kotani H."/>
            <person name="Tanaka A."/>
            <person name="Asamizu E."/>
            <person name="Nakamura Y."/>
            <person name="Miyajima N."/>
            <person name="Hirosawa M."/>
            <person name="Sugiura M."/>
            <person name="Sasamoto S."/>
            <person name="Kimura T."/>
            <person name="Hosouchi T."/>
            <person name="Matsuno A."/>
            <person name="Muraki A."/>
            <person name="Nakazaki N."/>
            <person name="Naruo K."/>
            <person name="Okumura S."/>
            <person name="Shimpo S."/>
            <person name="Takeuchi C."/>
            <person name="Wada T."/>
            <person name="Watanabe A."/>
            <person name="Yamada M."/>
            <person name="Yasuda M."/>
            <person name="Tabata S."/>
        </authorList>
    </citation>
    <scope>NUCLEOTIDE SEQUENCE [LARGE SCALE GENOMIC DNA]</scope>
    <source>
        <strain>ATCC 27184 / PCC 6803 / Kazusa</strain>
    </source>
</reference>
<accession>P37367</accession>
<accession>P73840</accession>
<proteinExistence type="inferred from homology"/>
<feature type="chain" id="PRO_0000046178" description="Cation-transporting ATPase pma1">
    <location>
        <begin position="1"/>
        <end position="905"/>
    </location>
</feature>
<feature type="transmembrane region" description="Helical" evidence="1">
    <location>
        <begin position="60"/>
        <end position="80"/>
    </location>
</feature>
<feature type="transmembrane region" description="Helical" evidence="1">
    <location>
        <begin position="81"/>
        <end position="101"/>
    </location>
</feature>
<feature type="transmembrane region" description="Helical" evidence="1">
    <location>
        <begin position="248"/>
        <end position="268"/>
    </location>
</feature>
<feature type="transmembrane region" description="Helical" evidence="1">
    <location>
        <begin position="283"/>
        <end position="303"/>
    </location>
</feature>
<feature type="transmembrane region" description="Helical" evidence="1">
    <location>
        <begin position="716"/>
        <end position="736"/>
    </location>
</feature>
<feature type="transmembrane region" description="Helical" evidence="1">
    <location>
        <begin position="774"/>
        <end position="794"/>
    </location>
</feature>
<feature type="transmembrane region" description="Helical" evidence="1">
    <location>
        <begin position="809"/>
        <end position="829"/>
    </location>
</feature>
<feature type="transmembrane region" description="Helical" evidence="1">
    <location>
        <begin position="848"/>
        <end position="868"/>
    </location>
</feature>
<feature type="transmembrane region" description="Helical" evidence="1">
    <location>
        <begin position="880"/>
        <end position="900"/>
    </location>
</feature>
<feature type="active site" description="4-aspartylphosphate intermediate" evidence="2">
    <location>
        <position position="333"/>
    </location>
</feature>
<feature type="sequence conflict" description="In Ref. 1; CAA50340." evidence="2" ref="1">
    <original>MDFPTLSSYLHHHRPGEDILADLHTDPGLGLTAE</original>
    <variation>MGAFPLPPNQYGFPHLKFLPPSPSTRGRHSCRFAHRSRFRSDSG</variation>
    <location>
        <begin position="1"/>
        <end position="34"/>
    </location>
</feature>
<feature type="sequence conflict" description="In Ref. 1; CAA50340." evidence="2" ref="1">
    <original>A</original>
    <variation>G</variation>
    <location>
        <position position="288"/>
    </location>
</feature>
<feature type="sequence conflict" description="In Ref. 1; CAA50340." evidence="2" ref="1">
    <original>A</original>
    <variation>R</variation>
    <location>
        <position position="897"/>
    </location>
</feature>
<evidence type="ECO:0000255" key="1"/>
<evidence type="ECO:0000305" key="2"/>